<evidence type="ECO:0000255" key="1">
    <source>
        <dbReference type="PROSITE-ProRule" id="PRU00160"/>
    </source>
</evidence>
<evidence type="ECO:0000256" key="2">
    <source>
        <dbReference type="SAM" id="MobiDB-lite"/>
    </source>
</evidence>
<evidence type="ECO:0000269" key="3">
    <source>
    </source>
</evidence>
<evidence type="ECO:0000305" key="4"/>
<evidence type="ECO:0000305" key="5">
    <source>
    </source>
</evidence>
<evidence type="ECO:0000312" key="6">
    <source>
        <dbReference type="ZFIN" id="ZDB-GENE-140513-1"/>
    </source>
</evidence>
<sequence length="1100" mass="122644">MASSVEDQQLQQEEAESVKDVQSHYLRCPSPSFSMMSDRFSTVSDRFSVISGSEAESIFMEPIHLSSTIAAKKIISEELPPRPARVSSPPDSALEPAQQLMVEDLYSRVQELLDERSLYNTPCVLDIQRALLRDRLEAPLSPVDEVWPNVFIAEKSVAVNKGRLKRLGITHVLNAAHGTGVYTGPLFYSGMNIHYMGIEVDDFPDADISPHFRSCAEFLDDALLTHRGKVLVDSMMGVSRSAVLVAAYLMIFQNMSIMEALLEIRKKRAISPNEGFIKQLRQLNETLMEERDEDDDETLSQCSVIDARGRLEEQESVFGVKADSIMVEEEEDGGGSVISSVASSAAAAALRAGVQCGSQQPNMQQPADQPSLPGQTREDEDGDVDRMILEWQKRNEKYQSEDWWEAQLLCEDEDDGEDKTQRAVRPDDLESVTSEDVRMVKERIGRRPRRAASLAGSTSSCSSYVDLWKQRLQELEEQAAARHRLQDQDTSSETQQKKIDDDVQSILSDSSSMYNFCKKNKENLTPLERWKIKRIQFGWNKKENAENGEQSEAEPAAAPDLEDVNLTAYQTWKLKQQKKHGGEENKEEILQMSRGEDTATARRRQRREEVLERSRRNLQESQSVCGWETESALSSSIPLSAFCAGAFPSASVCGDDSMSVLSGRSSVLSGRSTRSLPPAVLETPAPPTPVLGPNGEQMVNIANIQNWIASVVNETLQQKQTEMLMGASVAPSRAGSVFSAGRGVDDDKSSVLSGLSASTGLSRSRAESVVSVGAKARSVLSAAGRAESVFSAGGASQLSCGSRKSKITTTSVPLYSLFQDQVNLHKLDTMEKEIKSDMRDKMASYEIKKITEDNKRSTLYKKKKPKEDDEDVDIAKSNGLEELEARTCEKPKPKRDYGRSGILNLPASANNPTSSIDEWLEHVRPPSSKPRVYDGDSGPIRMSRPAYEELQEPSGLDFTSRRSSVSVEVDEEEDYSFRFSSRNCADDDLDPELSYSSRRSPSFNGLSESTSFASRRSYSRYEDEERSSFQNHSIKQKSSVYEDSGRTAGSRRDEEEDEEISAFIAQIKQRARARVAEEMEDDEVLTAWRKQEESKSHDHK</sequence>
<proteinExistence type="evidence at protein level"/>
<keyword id="KW-0963">Cytoplasm</keyword>
<keyword id="KW-1185">Reference proteome</keyword>
<protein>
    <recommendedName>
        <fullName>Serine/threonine/tyrosine-interacting-like protein 2</fullName>
    </recommendedName>
    <alternativeName>
        <fullName evidence="4">Inactive dual specificity phosphatase 27</fullName>
    </alternativeName>
</protein>
<reference key="1">
    <citation type="journal article" date="2013" name="Nature">
        <title>The zebrafish reference genome sequence and its relationship to the human genome.</title>
        <authorList>
            <person name="Howe K."/>
            <person name="Clark M.D."/>
            <person name="Torroja C.F."/>
            <person name="Torrance J."/>
            <person name="Berthelot C."/>
            <person name="Muffato M."/>
            <person name="Collins J.E."/>
            <person name="Humphray S."/>
            <person name="McLaren K."/>
            <person name="Matthews L."/>
            <person name="McLaren S."/>
            <person name="Sealy I."/>
            <person name="Caccamo M."/>
            <person name="Churcher C."/>
            <person name="Scott C."/>
            <person name="Barrett J.C."/>
            <person name="Koch R."/>
            <person name="Rauch G.J."/>
            <person name="White S."/>
            <person name="Chow W."/>
            <person name="Kilian B."/>
            <person name="Quintais L.T."/>
            <person name="Guerra-Assuncao J.A."/>
            <person name="Zhou Y."/>
            <person name="Gu Y."/>
            <person name="Yen J."/>
            <person name="Vogel J.H."/>
            <person name="Eyre T."/>
            <person name="Redmond S."/>
            <person name="Banerjee R."/>
            <person name="Chi J."/>
            <person name="Fu B."/>
            <person name="Langley E."/>
            <person name="Maguire S.F."/>
            <person name="Laird G.K."/>
            <person name="Lloyd D."/>
            <person name="Kenyon E."/>
            <person name="Donaldson S."/>
            <person name="Sehra H."/>
            <person name="Almeida-King J."/>
            <person name="Loveland J."/>
            <person name="Trevanion S."/>
            <person name="Jones M."/>
            <person name="Quail M."/>
            <person name="Willey D."/>
            <person name="Hunt A."/>
            <person name="Burton J."/>
            <person name="Sims S."/>
            <person name="McLay K."/>
            <person name="Plumb B."/>
            <person name="Davis J."/>
            <person name="Clee C."/>
            <person name="Oliver K."/>
            <person name="Clark R."/>
            <person name="Riddle C."/>
            <person name="Elliot D."/>
            <person name="Threadgold G."/>
            <person name="Harden G."/>
            <person name="Ware D."/>
            <person name="Begum S."/>
            <person name="Mortimore B."/>
            <person name="Kerry G."/>
            <person name="Heath P."/>
            <person name="Phillimore B."/>
            <person name="Tracey A."/>
            <person name="Corby N."/>
            <person name="Dunn M."/>
            <person name="Johnson C."/>
            <person name="Wood J."/>
            <person name="Clark S."/>
            <person name="Pelan S."/>
            <person name="Griffiths G."/>
            <person name="Smith M."/>
            <person name="Glithero R."/>
            <person name="Howden P."/>
            <person name="Barker N."/>
            <person name="Lloyd C."/>
            <person name="Stevens C."/>
            <person name="Harley J."/>
            <person name="Holt K."/>
            <person name="Panagiotidis G."/>
            <person name="Lovell J."/>
            <person name="Beasley H."/>
            <person name="Henderson C."/>
            <person name="Gordon D."/>
            <person name="Auger K."/>
            <person name="Wright D."/>
            <person name="Collins J."/>
            <person name="Raisen C."/>
            <person name="Dyer L."/>
            <person name="Leung K."/>
            <person name="Robertson L."/>
            <person name="Ambridge K."/>
            <person name="Leongamornlert D."/>
            <person name="McGuire S."/>
            <person name="Gilderthorp R."/>
            <person name="Griffiths C."/>
            <person name="Manthravadi D."/>
            <person name="Nichol S."/>
            <person name="Barker G."/>
            <person name="Whitehead S."/>
            <person name="Kay M."/>
            <person name="Brown J."/>
            <person name="Murnane C."/>
            <person name="Gray E."/>
            <person name="Humphries M."/>
            <person name="Sycamore N."/>
            <person name="Barker D."/>
            <person name="Saunders D."/>
            <person name="Wallis J."/>
            <person name="Babbage A."/>
            <person name="Hammond S."/>
            <person name="Mashreghi-Mohammadi M."/>
            <person name="Barr L."/>
            <person name="Martin S."/>
            <person name="Wray P."/>
            <person name="Ellington A."/>
            <person name="Matthews N."/>
            <person name="Ellwood M."/>
            <person name="Woodmansey R."/>
            <person name="Clark G."/>
            <person name="Cooper J."/>
            <person name="Tromans A."/>
            <person name="Grafham D."/>
            <person name="Skuce C."/>
            <person name="Pandian R."/>
            <person name="Andrews R."/>
            <person name="Harrison E."/>
            <person name="Kimberley A."/>
            <person name="Garnett J."/>
            <person name="Fosker N."/>
            <person name="Hall R."/>
            <person name="Garner P."/>
            <person name="Kelly D."/>
            <person name="Bird C."/>
            <person name="Palmer S."/>
            <person name="Gehring I."/>
            <person name="Berger A."/>
            <person name="Dooley C.M."/>
            <person name="Ersan-Urun Z."/>
            <person name="Eser C."/>
            <person name="Geiger H."/>
            <person name="Geisler M."/>
            <person name="Karotki L."/>
            <person name="Kirn A."/>
            <person name="Konantz J."/>
            <person name="Konantz M."/>
            <person name="Oberlander M."/>
            <person name="Rudolph-Geiger S."/>
            <person name="Teucke M."/>
            <person name="Lanz C."/>
            <person name="Raddatz G."/>
            <person name="Osoegawa K."/>
            <person name="Zhu B."/>
            <person name="Rapp A."/>
            <person name="Widaa S."/>
            <person name="Langford C."/>
            <person name="Yang F."/>
            <person name="Schuster S.C."/>
            <person name="Carter N.P."/>
            <person name="Harrow J."/>
            <person name="Ning Z."/>
            <person name="Herrero J."/>
            <person name="Searle S.M."/>
            <person name="Enright A."/>
            <person name="Geisler R."/>
            <person name="Plasterk R.H."/>
            <person name="Lee C."/>
            <person name="Westerfield M."/>
            <person name="de Jong P.J."/>
            <person name="Zon L.I."/>
            <person name="Postlethwait J.H."/>
            <person name="Nusslein-Volhard C."/>
            <person name="Hubbard T.J."/>
            <person name="Roest Crollius H."/>
            <person name="Rogers J."/>
            <person name="Stemple D.L."/>
        </authorList>
    </citation>
    <scope>NUCLEOTIDE SEQUENCE [LARGE SCALE GENOMIC DNA]</scope>
    <source>
        <strain>Tuebingen</strain>
    </source>
</reference>
<reference key="2">
    <citation type="journal article" date="2014" name="Dis. Model. Mech.">
        <title>Impaired embryonic motility in dusp27 mutants reveals a developmental defect in myofibril structure.</title>
        <authorList>
            <person name="Fero K."/>
            <person name="Bergeron S.A."/>
            <person name="Horstick E.J."/>
            <person name="Codore H."/>
            <person name="Li G.H."/>
            <person name="Ono F."/>
            <person name="Dowling J.J."/>
            <person name="Burgess H.A."/>
        </authorList>
    </citation>
    <scope>FUNCTION</scope>
    <scope>DISRUPTION PHENOTYPE</scope>
    <scope>DEVELOPMENTAL STAGE</scope>
    <scope>TISSUE SPECIFICITY</scope>
    <scope>SUBCELLULAR LOCATION</scope>
</reference>
<name>STYL2_DANRE</name>
<organism>
    <name type="scientific">Danio rerio</name>
    <name type="common">Zebrafish</name>
    <name type="synonym">Brachydanio rerio</name>
    <dbReference type="NCBI Taxonomy" id="7955"/>
    <lineage>
        <taxon>Eukaryota</taxon>
        <taxon>Metazoa</taxon>
        <taxon>Chordata</taxon>
        <taxon>Craniata</taxon>
        <taxon>Vertebrata</taxon>
        <taxon>Euteleostomi</taxon>
        <taxon>Actinopterygii</taxon>
        <taxon>Neopterygii</taxon>
        <taxon>Teleostei</taxon>
        <taxon>Ostariophysi</taxon>
        <taxon>Cypriniformes</taxon>
        <taxon>Danionidae</taxon>
        <taxon>Danioninae</taxon>
        <taxon>Danio</taxon>
    </lineage>
</organism>
<comment type="function">
    <text evidence="3">Required for myofiber maturation.</text>
</comment>
<comment type="subcellular location">
    <subcellularLocation>
        <location evidence="5">Cytoplasm</location>
        <location evidence="5">Myofibril</location>
        <location evidence="5">Sarcomere</location>
    </subcellularLocation>
</comment>
<comment type="tissue specificity">
    <text evidence="3">Expressed in muscle fibers in a regular striated pattern (at protein level).</text>
</comment>
<comment type="developmental stage">
    <text evidence="3">At 24 hpf, expressed in the somites and several regions of the brain, including the midbrain roof (tectum).</text>
</comment>
<comment type="disruption phenotype">
    <text evidence="3">At 2 dpf, morphants are morphologically normal but show pericardial edema and tail curvature. They exhibit near complete paralysis at embryonic and larval stages, producing extremely low levels of spontaneous coiling movements and a greatly diminished touch response. They show a severe disorganization of the contractile apparatus in muscle fibers. Sarcomeric structures in mutants are almost entirely absent and only rare triads are observed.</text>
</comment>
<comment type="similarity">
    <text evidence="4">Belongs to the protein-tyrosine phosphatase family. Non-receptor class dual specificity subfamily.</text>
</comment>
<comment type="caution">
    <text evidence="4">Ser-234 is present instead of the conserved Cys which is expected to be an active site residue suggesting that this protein has lost its phosphatase activity.</text>
</comment>
<gene>
    <name type="primary">styxl2</name>
    <name evidence="6" type="synonym">dusp27</name>
</gene>
<dbReference type="EMBL" id="CABZ01080368">
    <property type="status" value="NOT_ANNOTATED_CDS"/>
    <property type="molecule type" value="Genomic_DNA"/>
</dbReference>
<dbReference type="EMBL" id="CABZ01080369">
    <property type="status" value="NOT_ANNOTATED_CDS"/>
    <property type="molecule type" value="Genomic_DNA"/>
</dbReference>
<dbReference type="RefSeq" id="XP_003197655.1">
    <property type="nucleotide sequence ID" value="XM_003197607.4"/>
</dbReference>
<dbReference type="SMR" id="F1QWM2"/>
<dbReference type="FunCoup" id="F1QWM2">
    <property type="interactions" value="1204"/>
</dbReference>
<dbReference type="STRING" id="7955.ENSDARP00000141748"/>
<dbReference type="PaxDb" id="7955-ENSDARP00000107352"/>
<dbReference type="Ensembl" id="ENSDART00000167359">
    <property type="protein sequence ID" value="ENSDARP00000141748"/>
    <property type="gene ID" value="ENSDARG00000099889"/>
</dbReference>
<dbReference type="AGR" id="ZFIN:ZDB-GENE-140513-1"/>
<dbReference type="ZFIN" id="ZDB-GENE-140513-1">
    <property type="gene designation" value="dusp27"/>
</dbReference>
<dbReference type="eggNOG" id="KOG1716">
    <property type="taxonomic scope" value="Eukaryota"/>
</dbReference>
<dbReference type="HOGENOM" id="CLU_009343_0_0_1"/>
<dbReference type="InParanoid" id="F1QWM2"/>
<dbReference type="OMA" id="LSMQTNH"/>
<dbReference type="OrthoDB" id="2017893at2759"/>
<dbReference type="PRO" id="PR:F1QWM2"/>
<dbReference type="Proteomes" id="UP000000437">
    <property type="component" value="Unplaced"/>
</dbReference>
<dbReference type="Bgee" id="ENSDARG00000099889">
    <property type="expression patterns" value="Expressed in muscle tissue and 12 other cell types or tissues"/>
</dbReference>
<dbReference type="GO" id="GO:0005737">
    <property type="term" value="C:cytoplasm"/>
    <property type="evidence" value="ECO:0000318"/>
    <property type="project" value="GO_Central"/>
</dbReference>
<dbReference type="GO" id="GO:0030017">
    <property type="term" value="C:sarcomere"/>
    <property type="evidence" value="ECO:0007669"/>
    <property type="project" value="UniProtKB-SubCell"/>
</dbReference>
<dbReference type="GO" id="GO:0033549">
    <property type="term" value="F:MAP kinase phosphatase activity"/>
    <property type="evidence" value="ECO:0000318"/>
    <property type="project" value="GO_Central"/>
</dbReference>
<dbReference type="GO" id="GO:0008138">
    <property type="term" value="F:protein tyrosine/serine/threonine phosphatase activity"/>
    <property type="evidence" value="ECO:0000318"/>
    <property type="project" value="GO_Central"/>
</dbReference>
<dbReference type="GO" id="GO:0043409">
    <property type="term" value="P:negative regulation of MAPK cascade"/>
    <property type="evidence" value="ECO:0000318"/>
    <property type="project" value="GO_Central"/>
</dbReference>
<dbReference type="GO" id="GO:0014866">
    <property type="term" value="P:skeletal myofibril assembly"/>
    <property type="evidence" value="ECO:0000315"/>
    <property type="project" value="ZFIN"/>
</dbReference>
<dbReference type="Gene3D" id="3.90.190.10">
    <property type="entry name" value="Protein tyrosine phosphatase superfamily"/>
    <property type="match status" value="1"/>
</dbReference>
<dbReference type="InterPro" id="IPR020405">
    <property type="entry name" value="Atypical_DUSP_subfamA"/>
</dbReference>
<dbReference type="InterPro" id="IPR000340">
    <property type="entry name" value="Dual-sp_phosphatase_cat-dom"/>
</dbReference>
<dbReference type="InterPro" id="IPR029021">
    <property type="entry name" value="Prot-tyrosine_phosphatase-like"/>
</dbReference>
<dbReference type="InterPro" id="IPR000387">
    <property type="entry name" value="Tyr_Pase_dom"/>
</dbReference>
<dbReference type="InterPro" id="IPR020422">
    <property type="entry name" value="TYR_PHOSPHATASE_DUAL_dom"/>
</dbReference>
<dbReference type="PANTHER" id="PTHR45682">
    <property type="entry name" value="AGAP008228-PA"/>
    <property type="match status" value="1"/>
</dbReference>
<dbReference type="PANTHER" id="PTHR45682:SF4">
    <property type="entry name" value="SERINE_THREONINE_TYROSINE-INTERACTING-LIKE PROTEIN 2"/>
    <property type="match status" value="1"/>
</dbReference>
<dbReference type="Pfam" id="PF00782">
    <property type="entry name" value="DSPc"/>
    <property type="match status" value="1"/>
</dbReference>
<dbReference type="PRINTS" id="PR01908">
    <property type="entry name" value="ADSPHPHTASE"/>
</dbReference>
<dbReference type="PRINTS" id="PR01909">
    <property type="entry name" value="ADSPHPHTASEA"/>
</dbReference>
<dbReference type="SMART" id="SM00195">
    <property type="entry name" value="DSPc"/>
    <property type="match status" value="1"/>
</dbReference>
<dbReference type="SUPFAM" id="SSF52799">
    <property type="entry name" value="(Phosphotyrosine protein) phosphatases II"/>
    <property type="match status" value="1"/>
</dbReference>
<dbReference type="PROSITE" id="PS50056">
    <property type="entry name" value="TYR_PHOSPHATASE_2"/>
    <property type="match status" value="1"/>
</dbReference>
<dbReference type="PROSITE" id="PS50054">
    <property type="entry name" value="TYR_PHOSPHATASE_DUAL"/>
    <property type="match status" value="1"/>
</dbReference>
<accession>F1QWM2</accession>
<feature type="chain" id="PRO_0000442054" description="Serine/threonine/tyrosine-interacting-like protein 2">
    <location>
        <begin position="1"/>
        <end position="1100"/>
    </location>
</feature>
<feature type="domain" description="Tyrosine-protein phosphatase" evidence="1">
    <location>
        <begin position="141"/>
        <end position="289"/>
    </location>
</feature>
<feature type="region of interest" description="Disordered" evidence="2">
    <location>
        <begin position="1"/>
        <end position="21"/>
    </location>
</feature>
<feature type="region of interest" description="Disordered" evidence="2">
    <location>
        <begin position="356"/>
        <end position="383"/>
    </location>
</feature>
<feature type="region of interest" description="Disordered" evidence="2">
    <location>
        <begin position="411"/>
        <end position="436"/>
    </location>
</feature>
<feature type="region of interest" description="Disordered" evidence="2">
    <location>
        <begin position="479"/>
        <end position="504"/>
    </location>
</feature>
<feature type="region of interest" description="Disordered" evidence="2">
    <location>
        <begin position="542"/>
        <end position="561"/>
    </location>
</feature>
<feature type="region of interest" description="Disordered" evidence="2">
    <location>
        <begin position="575"/>
        <end position="615"/>
    </location>
</feature>
<feature type="region of interest" description="Disordered" evidence="2">
    <location>
        <begin position="667"/>
        <end position="686"/>
    </location>
</feature>
<feature type="region of interest" description="Disordered" evidence="2">
    <location>
        <begin position="888"/>
        <end position="1060"/>
    </location>
</feature>
<feature type="region of interest" description="Disordered" evidence="2">
    <location>
        <begin position="1075"/>
        <end position="1100"/>
    </location>
</feature>
<feature type="compositionally biased region" description="Polar residues" evidence="2">
    <location>
        <begin position="1"/>
        <end position="12"/>
    </location>
</feature>
<feature type="compositionally biased region" description="Polar residues" evidence="2">
    <location>
        <begin position="356"/>
        <end position="374"/>
    </location>
</feature>
<feature type="compositionally biased region" description="Basic and acidic residues" evidence="2">
    <location>
        <begin position="418"/>
        <end position="428"/>
    </location>
</feature>
<feature type="compositionally biased region" description="Basic and acidic residues" evidence="2">
    <location>
        <begin position="580"/>
        <end position="615"/>
    </location>
</feature>
<feature type="compositionally biased region" description="Low complexity" evidence="2">
    <location>
        <begin position="667"/>
        <end position="676"/>
    </location>
</feature>
<feature type="compositionally biased region" description="Basic and acidic residues" evidence="2">
    <location>
        <begin position="888"/>
        <end position="898"/>
    </location>
</feature>
<feature type="compositionally biased region" description="Polar residues" evidence="2">
    <location>
        <begin position="907"/>
        <end position="916"/>
    </location>
</feature>
<feature type="compositionally biased region" description="Polar residues" evidence="2">
    <location>
        <begin position="994"/>
        <end position="1013"/>
    </location>
</feature>
<feature type="compositionally biased region" description="Polar residues" evidence="2">
    <location>
        <begin position="1029"/>
        <end position="1041"/>
    </location>
</feature>
<feature type="compositionally biased region" description="Basic and acidic residues" evidence="2">
    <location>
        <begin position="1089"/>
        <end position="1100"/>
    </location>
</feature>